<evidence type="ECO:0000255" key="1">
    <source>
        <dbReference type="HAMAP-Rule" id="MF_04000"/>
    </source>
</evidence>
<evidence type="ECO:0000256" key="2">
    <source>
        <dbReference type="SAM" id="MobiDB-lite"/>
    </source>
</evidence>
<dbReference type="EC" id="5.6.2.4" evidence="1"/>
<dbReference type="EMBL" id="U31788">
    <property type="protein sequence ID" value="AAA79459.1"/>
    <property type="molecule type" value="Genomic_DNA"/>
</dbReference>
<dbReference type="SMR" id="Q80915"/>
<dbReference type="Proteomes" id="UP000009123">
    <property type="component" value="Genome"/>
</dbReference>
<dbReference type="GO" id="GO:0042025">
    <property type="term" value="C:host cell nucleus"/>
    <property type="evidence" value="ECO:0007669"/>
    <property type="project" value="UniProtKB-SubCell"/>
</dbReference>
<dbReference type="GO" id="GO:0005524">
    <property type="term" value="F:ATP binding"/>
    <property type="evidence" value="ECO:0007669"/>
    <property type="project" value="UniProtKB-UniRule"/>
</dbReference>
<dbReference type="GO" id="GO:0016887">
    <property type="term" value="F:ATP hydrolysis activity"/>
    <property type="evidence" value="ECO:0007669"/>
    <property type="project" value="RHEA"/>
</dbReference>
<dbReference type="GO" id="GO:0003677">
    <property type="term" value="F:DNA binding"/>
    <property type="evidence" value="ECO:0007669"/>
    <property type="project" value="UniProtKB-UniRule"/>
</dbReference>
<dbReference type="GO" id="GO:0003678">
    <property type="term" value="F:DNA helicase activity"/>
    <property type="evidence" value="ECO:0007669"/>
    <property type="project" value="UniProtKB-UniRule"/>
</dbReference>
<dbReference type="GO" id="GO:0006260">
    <property type="term" value="P:DNA replication"/>
    <property type="evidence" value="ECO:0007669"/>
    <property type="project" value="UniProtKB-UniRule"/>
</dbReference>
<dbReference type="Gene3D" id="3.40.1310.10">
    <property type="match status" value="1"/>
</dbReference>
<dbReference type="Gene3D" id="3.40.50.300">
    <property type="entry name" value="P-loop containing nucleotide triphosphate hydrolases"/>
    <property type="match status" value="1"/>
</dbReference>
<dbReference type="Gene3D" id="1.10.10.510">
    <property type="entry name" value="Zinc finger, large T-antigen D1 domain"/>
    <property type="match status" value="1"/>
</dbReference>
<dbReference type="HAMAP" id="MF_04000">
    <property type="entry name" value="PPV_E1"/>
    <property type="match status" value="1"/>
</dbReference>
<dbReference type="InterPro" id="IPR014015">
    <property type="entry name" value="Helicase_SF3_DNA-vir"/>
</dbReference>
<dbReference type="InterPro" id="IPR027417">
    <property type="entry name" value="P-loop_NTPase"/>
</dbReference>
<dbReference type="InterPro" id="IPR001177">
    <property type="entry name" value="PPV_DNA_helicase_E1_C"/>
</dbReference>
<dbReference type="InterPro" id="IPR014000">
    <property type="entry name" value="PPV_DNA_helicase_E1_N"/>
</dbReference>
<dbReference type="InterPro" id="IPR046832">
    <property type="entry name" value="PPV_E1_DBD"/>
</dbReference>
<dbReference type="InterPro" id="IPR046935">
    <property type="entry name" value="PPV_E1_DBD_sf"/>
</dbReference>
<dbReference type="InterPro" id="IPR016393">
    <property type="entry name" value="Rep_E1_papillomaV"/>
</dbReference>
<dbReference type="InterPro" id="IPR037102">
    <property type="entry name" value="Znf_lg_T-Ag_D1_dom_sf"/>
</dbReference>
<dbReference type="Pfam" id="PF00519">
    <property type="entry name" value="PPV_E1_C"/>
    <property type="match status" value="1"/>
</dbReference>
<dbReference type="Pfam" id="PF20450">
    <property type="entry name" value="PPV_E1_DBD"/>
    <property type="match status" value="1"/>
</dbReference>
<dbReference type="Pfam" id="PF00524">
    <property type="entry name" value="PPV_E1_N"/>
    <property type="match status" value="1"/>
</dbReference>
<dbReference type="PIRSF" id="PIRSF003383">
    <property type="entry name" value="Rep_E1_papillomaV"/>
    <property type="match status" value="1"/>
</dbReference>
<dbReference type="SUPFAM" id="SSF55464">
    <property type="entry name" value="Origin of replication-binding domain, RBD-like"/>
    <property type="match status" value="1"/>
</dbReference>
<dbReference type="SUPFAM" id="SSF52540">
    <property type="entry name" value="P-loop containing nucleoside triphosphate hydrolases"/>
    <property type="match status" value="1"/>
</dbReference>
<dbReference type="PROSITE" id="PS51206">
    <property type="entry name" value="SF3_HELICASE_1"/>
    <property type="match status" value="1"/>
</dbReference>
<name>VE1_HPV44</name>
<sequence length="643" mass="72736">MADNTGTEGTGCSGWFLVEAIVENTTGQQISEDEDEAVEDSGLDMVDFIDDRPITHNSMEAQALLNEQEADAHYAAVQDLKRKYLGSPYVSPLSNIEQAVECDISPRLDAITLSRQPKKVKRRLFDRPELTDSGYGNTEVEAETQVERNGEPEDCGGGGQGRDTEGVEQVETEVQTHSNTQQHTGTTRVLELLKCKNIRATLLGKFKDCYGLSYTDLIRQFKSDKTTCGDWVIAAFGVHHSVSEAFQNLIQPVTTYSHIQWLTNAWGMVLLALVRFKVNKNRCTVARMMATRLNIPEDHMLIEPPKIQSGVAALYWFRSGISNASIVTGETPEWITRQTIVEHGLADNQFKLADMVQWAYDNDFCEESEIAFEYAQRADIDANARAFLNSNCQAKYVKDCATMCKHYKTAEMKKMNMKQWIKFRSSKFEDTGNWKPIVQFLRHQNIEFIPFLTKLKMWLHGTPKKNCIAIVGPPDTGKSCFCMSLIKFLGGTVISYVNSSSHFWLQPLCNAKVALLDDVTQSCWVYMDTYMRNLLDGNPMTIDRKHKSLALIKCPPLIVTSNIDITKEEKYKYLCSRVTLFTFPNPFPFDRNGNALYDLCETNWKCFFARLSSSLDIQTSEDEDDGDNSQAFRCVPGTVVRTV</sequence>
<proteinExistence type="inferred from homology"/>
<reference key="1">
    <citation type="submission" date="1995-10" db="EMBL/GenBank/DDBJ databases">
        <authorList>
            <person name="Delius H."/>
        </authorList>
    </citation>
    <scope>NUCLEOTIDE SEQUENCE [GENOMIC DNA]</scope>
</reference>
<feature type="chain" id="PRO_0000133141" description="Replication protein E1">
    <location>
        <begin position="1"/>
        <end position="643"/>
    </location>
</feature>
<feature type="domain" description="SF3 helicase" evidence="1">
    <location>
        <begin position="446"/>
        <end position="596"/>
    </location>
</feature>
<feature type="region of interest" description="Disordered" evidence="2">
    <location>
        <begin position="130"/>
        <end position="166"/>
    </location>
</feature>
<feature type="region of interest" description="DNA-binding region" evidence="1">
    <location>
        <begin position="181"/>
        <end position="347"/>
    </location>
</feature>
<feature type="short sequence motif" description="Nuclear localization signal" evidence="1">
    <location>
        <begin position="81"/>
        <end position="83"/>
    </location>
</feature>
<feature type="short sequence motif" description="Nuclear export signal" evidence="1">
    <location>
        <begin position="104"/>
        <end position="113"/>
    </location>
</feature>
<feature type="binding site" evidence="1">
    <location>
        <begin position="472"/>
        <end position="479"/>
    </location>
    <ligand>
        <name>ATP</name>
        <dbReference type="ChEBI" id="CHEBI:30616"/>
    </ligand>
</feature>
<feature type="modified residue" description="Phosphoserine; by host" evidence="1">
    <location>
        <position position="87"/>
    </location>
</feature>
<feature type="modified residue" description="Phosphoserine; by host" evidence="1">
    <location>
        <position position="91"/>
    </location>
</feature>
<feature type="modified residue" description="Phosphoserine; by host" evidence="1">
    <location>
        <position position="105"/>
    </location>
</feature>
<feature type="cross-link" description="Glycyl lysine isopeptide (Lys-Gly) (interchain with G-Cter in SUMO)" evidence="1">
    <location>
        <position position="553"/>
    </location>
</feature>
<organismHost>
    <name type="scientific">Homo sapiens</name>
    <name type="common">Human</name>
    <dbReference type="NCBI Taxonomy" id="9606"/>
</organismHost>
<protein>
    <recommendedName>
        <fullName evidence="1">Replication protein E1</fullName>
        <ecNumber evidence="1">5.6.2.4</ecNumber>
    </recommendedName>
    <alternativeName>
        <fullName evidence="1">ATP-dependent helicase E1</fullName>
    </alternativeName>
    <alternativeName>
        <fullName evidence="1">DNA 3'-5' helicase E1</fullName>
    </alternativeName>
</protein>
<keyword id="KW-0067">ATP-binding</keyword>
<keyword id="KW-0235">DNA replication</keyword>
<keyword id="KW-0238">DNA-binding</keyword>
<keyword id="KW-0244">Early protein</keyword>
<keyword id="KW-0347">Helicase</keyword>
<keyword id="KW-1048">Host nucleus</keyword>
<keyword id="KW-0378">Hydrolase</keyword>
<keyword id="KW-0413">Isomerase</keyword>
<keyword id="KW-1017">Isopeptide bond</keyword>
<keyword id="KW-0547">Nucleotide-binding</keyword>
<keyword id="KW-0597">Phosphoprotein</keyword>
<keyword id="KW-1185">Reference proteome</keyword>
<keyword id="KW-0832">Ubl conjugation</keyword>
<gene>
    <name evidence="1" type="primary">E1</name>
</gene>
<accession>Q80915</accession>
<organism>
    <name type="scientific">Human papillomavirus 44</name>
    <dbReference type="NCBI Taxonomy" id="10592"/>
    <lineage>
        <taxon>Viruses</taxon>
        <taxon>Monodnaviria</taxon>
        <taxon>Shotokuvirae</taxon>
        <taxon>Cossaviricota</taxon>
        <taxon>Papovaviricetes</taxon>
        <taxon>Zurhausenvirales</taxon>
        <taxon>Papillomaviridae</taxon>
        <taxon>Firstpapillomavirinae</taxon>
        <taxon>Alphapapillomavirus</taxon>
        <taxon>Alphapapillomavirus 10</taxon>
    </lineage>
</organism>
<comment type="function">
    <text evidence="1">ATP-dependent DNA 3'-5' helicase required for initiation of viral DNA replication. It forms a complex with the viral E2 protein. The E1-E2 complex binds to the replication origin which contains binding sites for both proteins. During the initial step, a dimer of E1 interacts with a dimer of protein E2 leading to a complex that binds the viral origin of replication with high specificity. Then, a second dimer of E1 displaces the E2 dimer in an ATP-dependent manner to form the E1 tetramer. Following this, two E1 monomers are added to each half of the site, which results in the formation of two E1 trimers on the viral ori. Subsequently, two hexamers will be created. The double hexamer acts as a bi-directional helicase machinery and unwinds the viral DNA and then recruits the host DNA polymerase to start replication.</text>
</comment>
<comment type="catalytic activity">
    <reaction evidence="1">
        <text>Couples ATP hydrolysis with the unwinding of duplex DNA by translocating in the 3'-5' direction.</text>
        <dbReference type="EC" id="5.6.2.4"/>
    </reaction>
</comment>
<comment type="catalytic activity">
    <reaction evidence="1">
        <text>ATP + H2O = ADP + phosphate + H(+)</text>
        <dbReference type="Rhea" id="RHEA:13065"/>
        <dbReference type="ChEBI" id="CHEBI:15377"/>
        <dbReference type="ChEBI" id="CHEBI:15378"/>
        <dbReference type="ChEBI" id="CHEBI:30616"/>
        <dbReference type="ChEBI" id="CHEBI:43474"/>
        <dbReference type="ChEBI" id="CHEBI:456216"/>
        <dbReference type="EC" id="5.6.2.4"/>
    </reaction>
</comment>
<comment type="subunit">
    <text evidence="1">Can form hexamers. Interacts with E2 protein; this interaction increases E1 DNA binding specificity. Interacts with host DNA polymerase subunit POLA2. Interacts with host single stranded DNA-binding protein RPA1. Interacts with host TOP1; this interaction stimulates the enzymatic activity of TOP1.</text>
</comment>
<comment type="subcellular location">
    <subcellularLocation>
        <location evidence="1">Host nucleus</location>
    </subcellularLocation>
</comment>
<comment type="PTM">
    <text evidence="1">Phosphorylated.</text>
</comment>
<comment type="PTM">
    <text evidence="1">Sumoylated.</text>
</comment>
<comment type="similarity">
    <text evidence="1">Belongs to the papillomaviridae E1 protein family.</text>
</comment>